<proteinExistence type="inferred from homology"/>
<comment type="function">
    <text evidence="1">Catalyzes the ATP-dependent amination of UTP to CTP with either L-glutamine or ammonia as the source of nitrogen. Regulates intracellular CTP levels through interactions with the four ribonucleotide triphosphates.</text>
</comment>
<comment type="catalytic activity">
    <reaction evidence="1">
        <text>UTP + L-glutamine + ATP + H2O = CTP + L-glutamate + ADP + phosphate + 2 H(+)</text>
        <dbReference type="Rhea" id="RHEA:26426"/>
        <dbReference type="ChEBI" id="CHEBI:15377"/>
        <dbReference type="ChEBI" id="CHEBI:15378"/>
        <dbReference type="ChEBI" id="CHEBI:29985"/>
        <dbReference type="ChEBI" id="CHEBI:30616"/>
        <dbReference type="ChEBI" id="CHEBI:37563"/>
        <dbReference type="ChEBI" id="CHEBI:43474"/>
        <dbReference type="ChEBI" id="CHEBI:46398"/>
        <dbReference type="ChEBI" id="CHEBI:58359"/>
        <dbReference type="ChEBI" id="CHEBI:456216"/>
        <dbReference type="EC" id="6.3.4.2"/>
    </reaction>
</comment>
<comment type="catalytic activity">
    <reaction evidence="1">
        <text>L-glutamine + H2O = L-glutamate + NH4(+)</text>
        <dbReference type="Rhea" id="RHEA:15889"/>
        <dbReference type="ChEBI" id="CHEBI:15377"/>
        <dbReference type="ChEBI" id="CHEBI:28938"/>
        <dbReference type="ChEBI" id="CHEBI:29985"/>
        <dbReference type="ChEBI" id="CHEBI:58359"/>
    </reaction>
</comment>
<comment type="catalytic activity">
    <reaction evidence="1">
        <text>UTP + NH4(+) + ATP = CTP + ADP + phosphate + 2 H(+)</text>
        <dbReference type="Rhea" id="RHEA:16597"/>
        <dbReference type="ChEBI" id="CHEBI:15378"/>
        <dbReference type="ChEBI" id="CHEBI:28938"/>
        <dbReference type="ChEBI" id="CHEBI:30616"/>
        <dbReference type="ChEBI" id="CHEBI:37563"/>
        <dbReference type="ChEBI" id="CHEBI:43474"/>
        <dbReference type="ChEBI" id="CHEBI:46398"/>
        <dbReference type="ChEBI" id="CHEBI:456216"/>
    </reaction>
</comment>
<comment type="activity regulation">
    <text evidence="1">Allosterically activated by GTP, when glutamine is the substrate; GTP has no effect on the reaction when ammonia is the substrate. The allosteric effector GTP functions by stabilizing the protein conformation that binds the tetrahedral intermediate(s) formed during glutamine hydrolysis. Inhibited by the product CTP, via allosteric rather than competitive inhibition.</text>
</comment>
<comment type="pathway">
    <text evidence="1">Pyrimidine metabolism; CTP biosynthesis via de novo pathway; CTP from UDP: step 2/2.</text>
</comment>
<comment type="subunit">
    <text evidence="1">Homotetramer.</text>
</comment>
<comment type="miscellaneous">
    <text evidence="1">CTPSs have evolved a hybrid strategy for distinguishing between UTP and CTP. The overlapping regions of the product feedback inhibitory and substrate sites recognize a common feature in both compounds, the triphosphate moiety. To differentiate isosteric substrate and product pyrimidine rings, an additional pocket far from the expected kinase/ligase catalytic site, specifically recognizes the cytosine and ribose portions of the product inhibitor.</text>
</comment>
<comment type="similarity">
    <text evidence="1">Belongs to the CTP synthase family.</text>
</comment>
<evidence type="ECO:0000255" key="1">
    <source>
        <dbReference type="HAMAP-Rule" id="MF_01227"/>
    </source>
</evidence>
<organism>
    <name type="scientific">Cupriavidus taiwanensis (strain DSM 17343 / BCRC 17206 / CCUG 44338 / CIP 107171 / LMG 19424 / R1)</name>
    <name type="common">Ralstonia taiwanensis (strain LMG 19424)</name>
    <dbReference type="NCBI Taxonomy" id="977880"/>
    <lineage>
        <taxon>Bacteria</taxon>
        <taxon>Pseudomonadati</taxon>
        <taxon>Pseudomonadota</taxon>
        <taxon>Betaproteobacteria</taxon>
        <taxon>Burkholderiales</taxon>
        <taxon>Burkholderiaceae</taxon>
        <taxon>Cupriavidus</taxon>
    </lineage>
</organism>
<reference key="1">
    <citation type="journal article" date="2008" name="Genome Res.">
        <title>Genome sequence of the beta-rhizobium Cupriavidus taiwanensis and comparative genomics of rhizobia.</title>
        <authorList>
            <person name="Amadou C."/>
            <person name="Pascal G."/>
            <person name="Mangenot S."/>
            <person name="Glew M."/>
            <person name="Bontemps C."/>
            <person name="Capela D."/>
            <person name="Carrere S."/>
            <person name="Cruveiller S."/>
            <person name="Dossat C."/>
            <person name="Lajus A."/>
            <person name="Marchetti M."/>
            <person name="Poinsot V."/>
            <person name="Rouy Z."/>
            <person name="Servin B."/>
            <person name="Saad M."/>
            <person name="Schenowitz C."/>
            <person name="Barbe V."/>
            <person name="Batut J."/>
            <person name="Medigue C."/>
            <person name="Masson-Boivin C."/>
        </authorList>
    </citation>
    <scope>NUCLEOTIDE SEQUENCE [LARGE SCALE GENOMIC DNA]</scope>
    <source>
        <strain>DSM 17343 / BCRC 17206 / CCUG 44338 / CIP 107171 / LMG 19424 / R1</strain>
    </source>
</reference>
<feature type="chain" id="PRO_1000139430" description="CTP synthase">
    <location>
        <begin position="1"/>
        <end position="550"/>
    </location>
</feature>
<feature type="domain" description="Glutamine amidotransferase type-1" evidence="1">
    <location>
        <begin position="295"/>
        <end position="547"/>
    </location>
</feature>
<feature type="region of interest" description="Amidoligase domain" evidence="1">
    <location>
        <begin position="1"/>
        <end position="270"/>
    </location>
</feature>
<feature type="active site" description="Nucleophile; for glutamine hydrolysis" evidence="1">
    <location>
        <position position="383"/>
    </location>
</feature>
<feature type="active site" evidence="1">
    <location>
        <position position="520"/>
    </location>
</feature>
<feature type="active site" evidence="1">
    <location>
        <position position="522"/>
    </location>
</feature>
<feature type="binding site" evidence="1">
    <location>
        <position position="13"/>
    </location>
    <ligand>
        <name>CTP</name>
        <dbReference type="ChEBI" id="CHEBI:37563"/>
        <note>allosteric inhibitor</note>
    </ligand>
</feature>
<feature type="binding site" evidence="1">
    <location>
        <position position="13"/>
    </location>
    <ligand>
        <name>UTP</name>
        <dbReference type="ChEBI" id="CHEBI:46398"/>
    </ligand>
</feature>
<feature type="binding site" evidence="1">
    <location>
        <begin position="14"/>
        <end position="19"/>
    </location>
    <ligand>
        <name>ATP</name>
        <dbReference type="ChEBI" id="CHEBI:30616"/>
    </ligand>
</feature>
<feature type="binding site" evidence="1">
    <location>
        <position position="71"/>
    </location>
    <ligand>
        <name>ATP</name>
        <dbReference type="ChEBI" id="CHEBI:30616"/>
    </ligand>
</feature>
<feature type="binding site" evidence="1">
    <location>
        <position position="71"/>
    </location>
    <ligand>
        <name>Mg(2+)</name>
        <dbReference type="ChEBI" id="CHEBI:18420"/>
    </ligand>
</feature>
<feature type="binding site" evidence="1">
    <location>
        <position position="144"/>
    </location>
    <ligand>
        <name>Mg(2+)</name>
        <dbReference type="ChEBI" id="CHEBI:18420"/>
    </ligand>
</feature>
<feature type="binding site" evidence="1">
    <location>
        <begin position="151"/>
        <end position="153"/>
    </location>
    <ligand>
        <name>CTP</name>
        <dbReference type="ChEBI" id="CHEBI:37563"/>
        <note>allosteric inhibitor</note>
    </ligand>
</feature>
<feature type="binding site" evidence="1">
    <location>
        <begin position="191"/>
        <end position="196"/>
    </location>
    <ligand>
        <name>CTP</name>
        <dbReference type="ChEBI" id="CHEBI:37563"/>
        <note>allosteric inhibitor</note>
    </ligand>
</feature>
<feature type="binding site" evidence="1">
    <location>
        <begin position="191"/>
        <end position="196"/>
    </location>
    <ligand>
        <name>UTP</name>
        <dbReference type="ChEBI" id="CHEBI:46398"/>
    </ligand>
</feature>
<feature type="binding site" evidence="1">
    <location>
        <position position="227"/>
    </location>
    <ligand>
        <name>CTP</name>
        <dbReference type="ChEBI" id="CHEBI:37563"/>
        <note>allosteric inhibitor</note>
    </ligand>
</feature>
<feature type="binding site" evidence="1">
    <location>
        <position position="227"/>
    </location>
    <ligand>
        <name>UTP</name>
        <dbReference type="ChEBI" id="CHEBI:46398"/>
    </ligand>
</feature>
<feature type="binding site" evidence="1">
    <location>
        <position position="356"/>
    </location>
    <ligand>
        <name>L-glutamine</name>
        <dbReference type="ChEBI" id="CHEBI:58359"/>
    </ligand>
</feature>
<feature type="binding site" evidence="1">
    <location>
        <begin position="384"/>
        <end position="387"/>
    </location>
    <ligand>
        <name>L-glutamine</name>
        <dbReference type="ChEBI" id="CHEBI:58359"/>
    </ligand>
</feature>
<feature type="binding site" evidence="1">
    <location>
        <position position="407"/>
    </location>
    <ligand>
        <name>L-glutamine</name>
        <dbReference type="ChEBI" id="CHEBI:58359"/>
    </ligand>
</feature>
<feature type="binding site" evidence="1">
    <location>
        <position position="473"/>
    </location>
    <ligand>
        <name>L-glutamine</name>
        <dbReference type="ChEBI" id="CHEBI:58359"/>
    </ligand>
</feature>
<gene>
    <name evidence="1" type="primary">pyrG</name>
    <name type="ordered locus">RALTA_A1165</name>
</gene>
<keyword id="KW-0067">ATP-binding</keyword>
<keyword id="KW-0315">Glutamine amidotransferase</keyword>
<keyword id="KW-0436">Ligase</keyword>
<keyword id="KW-0460">Magnesium</keyword>
<keyword id="KW-0479">Metal-binding</keyword>
<keyword id="KW-0547">Nucleotide-binding</keyword>
<keyword id="KW-0665">Pyrimidine biosynthesis</keyword>
<accession>B3R496</accession>
<protein>
    <recommendedName>
        <fullName evidence="1">CTP synthase</fullName>
        <ecNumber evidence="1">6.3.4.2</ecNumber>
    </recommendedName>
    <alternativeName>
        <fullName evidence="1">Cytidine 5'-triphosphate synthase</fullName>
    </alternativeName>
    <alternativeName>
        <fullName evidence="1">Cytidine triphosphate synthetase</fullName>
        <shortName evidence="1">CTP synthetase</shortName>
        <shortName evidence="1">CTPS</shortName>
    </alternativeName>
    <alternativeName>
        <fullName evidence="1">UTP--ammonia ligase</fullName>
    </alternativeName>
</protein>
<sequence>MTKFVFVTGGVVSSLGKGIAAASLAAILESRGLKVTLLKLDPYINVDPGTMSPFQHGEVFVTEDGAETDLDLGHYERFVSAKMRKSNNFTTGQIYESVIRKERRGEYLGKTVQVIPHITNEIQAFIEKGAAASHDGKADVALVEIGGTVGDIESLPFLEAARQMSLRMGRNHCAFVHLTLVPFIASAGELKTKPTQHSVQKLREIGISPTALLCRADRPIPDDERAKISLFANIPQDAVISVWDADSIYKIPQMLNEQGLDRLICEELRLDPKPADLSMWQKLVNAQENPEHEITIGMVGKYVDLTESYKSLIEALRHAGMHTATRVNIEYIDSEELESGHLEVLAPLDAILVPGGFGKRGTEGKIRAIQYARENKIPYLGICLGMQLAVIEFARHLAGMADANSTEFNLETEHPVVALITEWVDREGKVEQRSADSDLGGTMRLGAQRVPVKEGTKARAIYGAEVNERHRHRYEVNNHYVPTLEKAGMVISARTPTENLPEMMELPESMHPWFVGVQFHPEFTSTPRDGHPLFKAYVEAALASQQRKGA</sequence>
<dbReference type="EC" id="6.3.4.2" evidence="1"/>
<dbReference type="EMBL" id="CU633749">
    <property type="protein sequence ID" value="CAQ69129.1"/>
    <property type="molecule type" value="Genomic_DNA"/>
</dbReference>
<dbReference type="RefSeq" id="WP_012352457.1">
    <property type="nucleotide sequence ID" value="NC_010528.1"/>
</dbReference>
<dbReference type="SMR" id="B3R496"/>
<dbReference type="GeneID" id="29763053"/>
<dbReference type="KEGG" id="cti:RALTA_A1165"/>
<dbReference type="eggNOG" id="COG0504">
    <property type="taxonomic scope" value="Bacteria"/>
</dbReference>
<dbReference type="HOGENOM" id="CLU_011675_5_0_4"/>
<dbReference type="BioCyc" id="CTAI977880:RALTA_RS05565-MONOMER"/>
<dbReference type="UniPathway" id="UPA00159">
    <property type="reaction ID" value="UER00277"/>
</dbReference>
<dbReference type="Proteomes" id="UP000001692">
    <property type="component" value="Chromosome 1"/>
</dbReference>
<dbReference type="GO" id="GO:0005829">
    <property type="term" value="C:cytosol"/>
    <property type="evidence" value="ECO:0007669"/>
    <property type="project" value="TreeGrafter"/>
</dbReference>
<dbReference type="GO" id="GO:0005524">
    <property type="term" value="F:ATP binding"/>
    <property type="evidence" value="ECO:0007669"/>
    <property type="project" value="UniProtKB-KW"/>
</dbReference>
<dbReference type="GO" id="GO:0003883">
    <property type="term" value="F:CTP synthase activity"/>
    <property type="evidence" value="ECO:0007669"/>
    <property type="project" value="UniProtKB-UniRule"/>
</dbReference>
<dbReference type="GO" id="GO:0004359">
    <property type="term" value="F:glutaminase activity"/>
    <property type="evidence" value="ECO:0007669"/>
    <property type="project" value="RHEA"/>
</dbReference>
<dbReference type="GO" id="GO:0042802">
    <property type="term" value="F:identical protein binding"/>
    <property type="evidence" value="ECO:0007669"/>
    <property type="project" value="TreeGrafter"/>
</dbReference>
<dbReference type="GO" id="GO:0046872">
    <property type="term" value="F:metal ion binding"/>
    <property type="evidence" value="ECO:0007669"/>
    <property type="project" value="UniProtKB-KW"/>
</dbReference>
<dbReference type="GO" id="GO:0044210">
    <property type="term" value="P:'de novo' CTP biosynthetic process"/>
    <property type="evidence" value="ECO:0007669"/>
    <property type="project" value="UniProtKB-UniRule"/>
</dbReference>
<dbReference type="GO" id="GO:0019856">
    <property type="term" value="P:pyrimidine nucleobase biosynthetic process"/>
    <property type="evidence" value="ECO:0007669"/>
    <property type="project" value="TreeGrafter"/>
</dbReference>
<dbReference type="CDD" id="cd03113">
    <property type="entry name" value="CTPS_N"/>
    <property type="match status" value="1"/>
</dbReference>
<dbReference type="CDD" id="cd01746">
    <property type="entry name" value="GATase1_CTP_Synthase"/>
    <property type="match status" value="1"/>
</dbReference>
<dbReference type="FunFam" id="3.40.50.300:FF:000009">
    <property type="entry name" value="CTP synthase"/>
    <property type="match status" value="1"/>
</dbReference>
<dbReference type="FunFam" id="3.40.50.880:FF:000002">
    <property type="entry name" value="CTP synthase"/>
    <property type="match status" value="1"/>
</dbReference>
<dbReference type="Gene3D" id="3.40.50.880">
    <property type="match status" value="1"/>
</dbReference>
<dbReference type="Gene3D" id="3.40.50.300">
    <property type="entry name" value="P-loop containing nucleotide triphosphate hydrolases"/>
    <property type="match status" value="1"/>
</dbReference>
<dbReference type="HAMAP" id="MF_01227">
    <property type="entry name" value="PyrG"/>
    <property type="match status" value="1"/>
</dbReference>
<dbReference type="InterPro" id="IPR029062">
    <property type="entry name" value="Class_I_gatase-like"/>
</dbReference>
<dbReference type="InterPro" id="IPR004468">
    <property type="entry name" value="CTP_synthase"/>
</dbReference>
<dbReference type="InterPro" id="IPR017456">
    <property type="entry name" value="CTP_synthase_N"/>
</dbReference>
<dbReference type="InterPro" id="IPR017926">
    <property type="entry name" value="GATASE"/>
</dbReference>
<dbReference type="InterPro" id="IPR033828">
    <property type="entry name" value="GATase1_CTP_Synthase"/>
</dbReference>
<dbReference type="InterPro" id="IPR027417">
    <property type="entry name" value="P-loop_NTPase"/>
</dbReference>
<dbReference type="NCBIfam" id="NF003792">
    <property type="entry name" value="PRK05380.1"/>
    <property type="match status" value="1"/>
</dbReference>
<dbReference type="NCBIfam" id="TIGR00337">
    <property type="entry name" value="PyrG"/>
    <property type="match status" value="1"/>
</dbReference>
<dbReference type="PANTHER" id="PTHR11550">
    <property type="entry name" value="CTP SYNTHASE"/>
    <property type="match status" value="1"/>
</dbReference>
<dbReference type="PANTHER" id="PTHR11550:SF0">
    <property type="entry name" value="CTP SYNTHASE-RELATED"/>
    <property type="match status" value="1"/>
</dbReference>
<dbReference type="Pfam" id="PF06418">
    <property type="entry name" value="CTP_synth_N"/>
    <property type="match status" value="1"/>
</dbReference>
<dbReference type="Pfam" id="PF00117">
    <property type="entry name" value="GATase"/>
    <property type="match status" value="1"/>
</dbReference>
<dbReference type="SUPFAM" id="SSF52317">
    <property type="entry name" value="Class I glutamine amidotransferase-like"/>
    <property type="match status" value="1"/>
</dbReference>
<dbReference type="SUPFAM" id="SSF52540">
    <property type="entry name" value="P-loop containing nucleoside triphosphate hydrolases"/>
    <property type="match status" value="1"/>
</dbReference>
<dbReference type="PROSITE" id="PS51273">
    <property type="entry name" value="GATASE_TYPE_1"/>
    <property type="match status" value="1"/>
</dbReference>
<name>PYRG_CUPTR</name>